<protein>
    <recommendedName>
        <fullName>Meiotically up-regulated protein C8C9.04</fullName>
    </recommendedName>
</protein>
<evidence type="ECO:0000256" key="1">
    <source>
        <dbReference type="SAM" id="MobiDB-lite"/>
    </source>
</evidence>
<evidence type="ECO:0000269" key="2">
    <source>
    </source>
</evidence>
<evidence type="ECO:0000269" key="3">
    <source>
    </source>
</evidence>
<feature type="chain" id="PRO_0000304022" description="Meiotically up-regulated protein C8C9.04">
    <location>
        <begin position="1"/>
        <end position="647"/>
    </location>
</feature>
<feature type="region of interest" description="Disordered" evidence="1">
    <location>
        <begin position="1"/>
        <end position="241"/>
    </location>
</feature>
<feature type="region of interest" description="Disordered" evidence="1">
    <location>
        <begin position="387"/>
        <end position="647"/>
    </location>
</feature>
<feature type="compositionally biased region" description="Polar residues" evidence="1">
    <location>
        <begin position="29"/>
        <end position="46"/>
    </location>
</feature>
<feature type="compositionally biased region" description="Basic residues" evidence="1">
    <location>
        <begin position="49"/>
        <end position="67"/>
    </location>
</feature>
<feature type="compositionally biased region" description="Polar residues" evidence="1">
    <location>
        <begin position="92"/>
        <end position="103"/>
    </location>
</feature>
<feature type="compositionally biased region" description="Low complexity" evidence="1">
    <location>
        <begin position="134"/>
        <end position="145"/>
    </location>
</feature>
<feature type="compositionally biased region" description="Polar residues" evidence="1">
    <location>
        <begin position="146"/>
        <end position="155"/>
    </location>
</feature>
<feature type="compositionally biased region" description="Low complexity" evidence="1">
    <location>
        <begin position="156"/>
        <end position="177"/>
    </location>
</feature>
<feature type="compositionally biased region" description="Polar residues" evidence="1">
    <location>
        <begin position="193"/>
        <end position="215"/>
    </location>
</feature>
<feature type="compositionally biased region" description="Basic and acidic residues" evidence="1">
    <location>
        <begin position="232"/>
        <end position="241"/>
    </location>
</feature>
<feature type="compositionally biased region" description="Polar residues" evidence="1">
    <location>
        <begin position="390"/>
        <end position="406"/>
    </location>
</feature>
<feature type="compositionally biased region" description="Polar residues" evidence="1">
    <location>
        <begin position="413"/>
        <end position="432"/>
    </location>
</feature>
<feature type="compositionally biased region" description="Polar residues" evidence="1">
    <location>
        <begin position="488"/>
        <end position="508"/>
    </location>
</feature>
<feature type="compositionally biased region" description="Low complexity" evidence="1">
    <location>
        <begin position="518"/>
        <end position="530"/>
    </location>
</feature>
<feature type="compositionally biased region" description="Polar residues" evidence="1">
    <location>
        <begin position="561"/>
        <end position="589"/>
    </location>
</feature>
<feature type="compositionally biased region" description="Low complexity" evidence="1">
    <location>
        <begin position="596"/>
        <end position="613"/>
    </location>
</feature>
<feature type="compositionally biased region" description="Basic residues" evidence="1">
    <location>
        <begin position="633"/>
        <end position="647"/>
    </location>
</feature>
<feature type="modified residue" description="Phosphoserine" evidence="3">
    <location>
        <position position="162"/>
    </location>
</feature>
<feature type="modified residue" description="Phosphoserine" evidence="3">
    <location>
        <position position="165"/>
    </location>
</feature>
<feature type="modified residue" description="Phosphothreonine" evidence="3">
    <location>
        <position position="168"/>
    </location>
</feature>
<feature type="modified residue" description="Phosphoserine" evidence="3">
    <location>
        <position position="197"/>
    </location>
</feature>
<feature type="modified residue" description="Phosphoserine" evidence="3">
    <location>
        <position position="200"/>
    </location>
</feature>
<feature type="modified residue" description="Phosphoserine" evidence="3">
    <location>
        <position position="396"/>
    </location>
</feature>
<feature type="modified residue" description="Phosphoserine" evidence="3">
    <location>
        <position position="489"/>
    </location>
</feature>
<feature type="modified residue" description="Phosphoserine" evidence="3">
    <location>
        <position position="490"/>
    </location>
</feature>
<feature type="modified residue" description="Phosphothreonine" evidence="3">
    <location>
        <position position="491"/>
    </location>
</feature>
<feature type="modified residue" description="Phosphoserine" evidence="3">
    <location>
        <position position="515"/>
    </location>
</feature>
<feature type="modified residue" description="Phosphoserine" evidence="3">
    <location>
        <position position="519"/>
    </location>
</feature>
<feature type="modified residue" description="Phosphoserine" evidence="3">
    <location>
        <position position="523"/>
    </location>
</feature>
<dbReference type="EMBL" id="CU329670">
    <property type="protein sequence ID" value="CAB16292.1"/>
    <property type="molecule type" value="Genomic_DNA"/>
</dbReference>
<dbReference type="PIR" id="T39141">
    <property type="entry name" value="T39141"/>
</dbReference>
<dbReference type="RefSeq" id="NP_594275.1">
    <property type="nucleotide sequence ID" value="NM_001019698.2"/>
</dbReference>
<dbReference type="SMR" id="O14273"/>
<dbReference type="BioGRID" id="279664">
    <property type="interactions" value="22"/>
</dbReference>
<dbReference type="FunCoup" id="O14273">
    <property type="interactions" value="54"/>
</dbReference>
<dbReference type="IntAct" id="O14273">
    <property type="interactions" value="1"/>
</dbReference>
<dbReference type="iPTMnet" id="O14273"/>
<dbReference type="PaxDb" id="4896-SPAC8C9.04.1"/>
<dbReference type="EnsemblFungi" id="SPAC8C9.04.1">
    <property type="protein sequence ID" value="SPAC8C9.04.1:pep"/>
    <property type="gene ID" value="SPAC8C9.04"/>
</dbReference>
<dbReference type="KEGG" id="spo:2543236"/>
<dbReference type="PomBase" id="SPAC8C9.04"/>
<dbReference type="VEuPathDB" id="FungiDB:SPAC8C9.04"/>
<dbReference type="HOGENOM" id="CLU_423444_0_0_1"/>
<dbReference type="InParanoid" id="O14273"/>
<dbReference type="OMA" id="AREEDHT"/>
<dbReference type="PRO" id="PR:O14273"/>
<dbReference type="Proteomes" id="UP000002485">
    <property type="component" value="Chromosome I"/>
</dbReference>
<dbReference type="GO" id="GO:0032153">
    <property type="term" value="C:cell division site"/>
    <property type="evidence" value="ECO:0007005"/>
    <property type="project" value="PomBase"/>
</dbReference>
<dbReference type="GO" id="GO:0071944">
    <property type="term" value="C:cell periphery"/>
    <property type="evidence" value="ECO:0007005"/>
    <property type="project" value="PomBase"/>
</dbReference>
<dbReference type="GO" id="GO:0005886">
    <property type="term" value="C:plasma membrane"/>
    <property type="evidence" value="ECO:0000314"/>
    <property type="project" value="PomBase"/>
</dbReference>
<dbReference type="GO" id="GO:0051321">
    <property type="term" value="P:meiotic cell cycle"/>
    <property type="evidence" value="ECO:0007669"/>
    <property type="project" value="UniProtKB-KW"/>
</dbReference>
<name>YET4_SCHPO</name>
<proteinExistence type="evidence at protein level"/>
<accession>O14273</accession>
<keyword id="KW-0469">Meiosis</keyword>
<keyword id="KW-0597">Phosphoprotein</keyword>
<keyword id="KW-1185">Reference proteome</keyword>
<organism>
    <name type="scientific">Schizosaccharomyces pombe (strain 972 / ATCC 24843)</name>
    <name type="common">Fission yeast</name>
    <dbReference type="NCBI Taxonomy" id="284812"/>
    <lineage>
        <taxon>Eukaryota</taxon>
        <taxon>Fungi</taxon>
        <taxon>Dikarya</taxon>
        <taxon>Ascomycota</taxon>
        <taxon>Taphrinomycotina</taxon>
        <taxon>Schizosaccharomycetes</taxon>
        <taxon>Schizosaccharomycetales</taxon>
        <taxon>Schizosaccharomycetaceae</taxon>
        <taxon>Schizosaccharomyces</taxon>
    </lineage>
</organism>
<sequence length="647" mass="67036">MTTNPDIVKQTKNEIHQVTSRVQEKLDSKSTNAVEQNNNSSQASVTKDNKKKAAKRAKKKAAKKKKQSAAASASSTPVEEAQHAQEEQQEQTILQEPGFTQTIVEKDADQVDEPLEPIASSALGTVEPPTDNKPSASTSTAVPTTEARNTSITEPANSPSSSSSSASTKSTATTQSADYVVAEHFAPQRNDEQLGNSPASITSKPATTSAAQPSSKVEENMAKATSQPITTAEKEIPELKPIEPEAIMISKEINTTHDQAAATTTAAVASASTTATAESHAVADGIMNDNVLESIGENVQQETVFEDASDIPHADVIPHTTTVTVEEESPIALGQGGVTHEATTSARASASGIPGAFEEVQQTVQEDLPHPTAETVEIARFAEQPVRAQQPEQYESSVVQEATETVTDVGKGVSSTVKNEVNVPSTIPTESENPVAVGGTTAEHPVQEAVTAPTETAHDFSKETTTASKRVSKHDKASAEKHKVARKPSSTGQEPTTPSTPAKSAQSSKHARRPSKQASAPSSPGTTSAAVPGGKKSAIEAAAPIPTSADTVESKHAAGSGSATTIPSPGSATTKPTPGSATTKPTPVSATEEHAAGTTKPAPAAGATATAENETADGKAQTATDGEAAPKKSWFKRMKKSFGKLFH</sequence>
<gene>
    <name type="ORF">SPAC8C9.04</name>
</gene>
<comment type="function">
    <text evidence="2">Has a role in meiosis and sporulation.</text>
</comment>
<reference key="1">
    <citation type="journal article" date="2002" name="Nature">
        <title>The genome sequence of Schizosaccharomyces pombe.</title>
        <authorList>
            <person name="Wood V."/>
            <person name="Gwilliam R."/>
            <person name="Rajandream M.A."/>
            <person name="Lyne M.H."/>
            <person name="Lyne R."/>
            <person name="Stewart A."/>
            <person name="Sgouros J.G."/>
            <person name="Peat N."/>
            <person name="Hayles J."/>
            <person name="Baker S.G."/>
            <person name="Basham D."/>
            <person name="Bowman S."/>
            <person name="Brooks K."/>
            <person name="Brown D."/>
            <person name="Brown S."/>
            <person name="Chillingworth T."/>
            <person name="Churcher C.M."/>
            <person name="Collins M."/>
            <person name="Connor R."/>
            <person name="Cronin A."/>
            <person name="Davis P."/>
            <person name="Feltwell T."/>
            <person name="Fraser A."/>
            <person name="Gentles S."/>
            <person name="Goble A."/>
            <person name="Hamlin N."/>
            <person name="Harris D.E."/>
            <person name="Hidalgo J."/>
            <person name="Hodgson G."/>
            <person name="Holroyd S."/>
            <person name="Hornsby T."/>
            <person name="Howarth S."/>
            <person name="Huckle E.J."/>
            <person name="Hunt S."/>
            <person name="Jagels K."/>
            <person name="James K.D."/>
            <person name="Jones L."/>
            <person name="Jones M."/>
            <person name="Leather S."/>
            <person name="McDonald S."/>
            <person name="McLean J."/>
            <person name="Mooney P."/>
            <person name="Moule S."/>
            <person name="Mungall K.L."/>
            <person name="Murphy L.D."/>
            <person name="Niblett D."/>
            <person name="Odell C."/>
            <person name="Oliver K."/>
            <person name="O'Neil S."/>
            <person name="Pearson D."/>
            <person name="Quail M.A."/>
            <person name="Rabbinowitsch E."/>
            <person name="Rutherford K.M."/>
            <person name="Rutter S."/>
            <person name="Saunders D."/>
            <person name="Seeger K."/>
            <person name="Sharp S."/>
            <person name="Skelton J."/>
            <person name="Simmonds M.N."/>
            <person name="Squares R."/>
            <person name="Squares S."/>
            <person name="Stevens K."/>
            <person name="Taylor K."/>
            <person name="Taylor R.G."/>
            <person name="Tivey A."/>
            <person name="Walsh S.V."/>
            <person name="Warren T."/>
            <person name="Whitehead S."/>
            <person name="Woodward J.R."/>
            <person name="Volckaert G."/>
            <person name="Aert R."/>
            <person name="Robben J."/>
            <person name="Grymonprez B."/>
            <person name="Weltjens I."/>
            <person name="Vanstreels E."/>
            <person name="Rieger M."/>
            <person name="Schaefer M."/>
            <person name="Mueller-Auer S."/>
            <person name="Gabel C."/>
            <person name="Fuchs M."/>
            <person name="Duesterhoeft A."/>
            <person name="Fritzc C."/>
            <person name="Holzer E."/>
            <person name="Moestl D."/>
            <person name="Hilbert H."/>
            <person name="Borzym K."/>
            <person name="Langer I."/>
            <person name="Beck A."/>
            <person name="Lehrach H."/>
            <person name="Reinhardt R."/>
            <person name="Pohl T.M."/>
            <person name="Eger P."/>
            <person name="Zimmermann W."/>
            <person name="Wedler H."/>
            <person name="Wambutt R."/>
            <person name="Purnelle B."/>
            <person name="Goffeau A."/>
            <person name="Cadieu E."/>
            <person name="Dreano S."/>
            <person name="Gloux S."/>
            <person name="Lelaure V."/>
            <person name="Mottier S."/>
            <person name="Galibert F."/>
            <person name="Aves S.J."/>
            <person name="Xiang Z."/>
            <person name="Hunt C."/>
            <person name="Moore K."/>
            <person name="Hurst S.M."/>
            <person name="Lucas M."/>
            <person name="Rochet M."/>
            <person name="Gaillardin C."/>
            <person name="Tallada V.A."/>
            <person name="Garzon A."/>
            <person name="Thode G."/>
            <person name="Daga R.R."/>
            <person name="Cruzado L."/>
            <person name="Jimenez J."/>
            <person name="Sanchez M."/>
            <person name="del Rey F."/>
            <person name="Benito J."/>
            <person name="Dominguez A."/>
            <person name="Revuelta J.L."/>
            <person name="Moreno S."/>
            <person name="Armstrong J."/>
            <person name="Forsburg S.L."/>
            <person name="Cerutti L."/>
            <person name="Lowe T."/>
            <person name="McCombie W.R."/>
            <person name="Paulsen I."/>
            <person name="Potashkin J."/>
            <person name="Shpakovski G.V."/>
            <person name="Ussery D."/>
            <person name="Barrell B.G."/>
            <person name="Nurse P."/>
        </authorList>
    </citation>
    <scope>NUCLEOTIDE SEQUENCE [LARGE SCALE GENOMIC DNA]</scope>
    <source>
        <strain>972 / ATCC 24843</strain>
    </source>
</reference>
<reference key="2">
    <citation type="journal article" date="2002" name="Nat. Genet.">
        <title>The transcriptional program of meiosis and sporulation in fission yeast.</title>
        <authorList>
            <person name="Mata J."/>
            <person name="Lyne R."/>
            <person name="Burns G."/>
            <person name="Baehler J."/>
        </authorList>
    </citation>
    <scope>FUNCTION</scope>
</reference>
<reference key="3">
    <citation type="journal article" date="2008" name="J. Proteome Res.">
        <title>Phosphoproteome analysis of fission yeast.</title>
        <authorList>
            <person name="Wilson-Grady J.T."/>
            <person name="Villen J."/>
            <person name="Gygi S.P."/>
        </authorList>
    </citation>
    <scope>PHOSPHORYLATION [LARGE SCALE ANALYSIS] AT SER-162; SER-165; THR-168; SER-197; SER-200; SER-396; SER-489; SER-490; THR-491; SER-515; SER-519 AND SER-523</scope>
    <scope>IDENTIFICATION BY MASS SPECTROMETRY</scope>
</reference>